<dbReference type="EC" id="1.18.1.2" evidence="1"/>
<dbReference type="EMBL" id="CP000359">
    <property type="protein sequence ID" value="ABF45313.1"/>
    <property type="molecule type" value="Genomic_DNA"/>
</dbReference>
<dbReference type="RefSeq" id="WP_011530150.1">
    <property type="nucleotide sequence ID" value="NC_008025.1"/>
</dbReference>
<dbReference type="SMR" id="Q1IZM1"/>
<dbReference type="STRING" id="319795.Dgeo_1013"/>
<dbReference type="KEGG" id="dge:Dgeo_1013"/>
<dbReference type="eggNOG" id="COG0492">
    <property type="taxonomic scope" value="Bacteria"/>
</dbReference>
<dbReference type="HOGENOM" id="CLU_031864_5_5_0"/>
<dbReference type="Proteomes" id="UP000002431">
    <property type="component" value="Chromosome"/>
</dbReference>
<dbReference type="GO" id="GO:0004324">
    <property type="term" value="F:ferredoxin-NADP+ reductase activity"/>
    <property type="evidence" value="ECO:0007669"/>
    <property type="project" value="UniProtKB-UniRule"/>
</dbReference>
<dbReference type="GO" id="GO:0050660">
    <property type="term" value="F:flavin adenine dinucleotide binding"/>
    <property type="evidence" value="ECO:0007669"/>
    <property type="project" value="UniProtKB-UniRule"/>
</dbReference>
<dbReference type="GO" id="GO:0050661">
    <property type="term" value="F:NADP binding"/>
    <property type="evidence" value="ECO:0007669"/>
    <property type="project" value="UniProtKB-UniRule"/>
</dbReference>
<dbReference type="Gene3D" id="3.50.50.60">
    <property type="entry name" value="FAD/NAD(P)-binding domain"/>
    <property type="match status" value="2"/>
</dbReference>
<dbReference type="HAMAP" id="MF_01685">
    <property type="entry name" value="FENR2"/>
    <property type="match status" value="1"/>
</dbReference>
<dbReference type="InterPro" id="IPR036188">
    <property type="entry name" value="FAD/NAD-bd_sf"/>
</dbReference>
<dbReference type="InterPro" id="IPR023753">
    <property type="entry name" value="FAD/NAD-binding_dom"/>
</dbReference>
<dbReference type="InterPro" id="IPR022890">
    <property type="entry name" value="Fd--NADP_Rdtase_type_2"/>
</dbReference>
<dbReference type="InterPro" id="IPR050097">
    <property type="entry name" value="Ferredoxin-NADP_redctase_2"/>
</dbReference>
<dbReference type="PANTHER" id="PTHR48105">
    <property type="entry name" value="THIOREDOXIN REDUCTASE 1-RELATED-RELATED"/>
    <property type="match status" value="1"/>
</dbReference>
<dbReference type="Pfam" id="PF07992">
    <property type="entry name" value="Pyr_redox_2"/>
    <property type="match status" value="1"/>
</dbReference>
<dbReference type="PRINTS" id="PR00368">
    <property type="entry name" value="FADPNR"/>
</dbReference>
<dbReference type="PRINTS" id="PR00469">
    <property type="entry name" value="PNDRDTASEII"/>
</dbReference>
<dbReference type="SUPFAM" id="SSF51905">
    <property type="entry name" value="FAD/NAD(P)-binding domain"/>
    <property type="match status" value="1"/>
</dbReference>
<accession>Q1IZM1</accession>
<sequence>MQSKQAPDTEILVIGGGPAGLHAAFYAAWRGLSVRVLEARGEVGGQLLALYPDKVIYDVPGVPQVRAAELVAALCAQLGPLDVDLRTGEVARTLEPDGTGGWVIGTAGARHRARAVILAAGMGALLPREVRVPGADTHPDVRADLPDPAGFAGRRVLVVGGVPQATRAAVELLEAGATVTLTHRRAGFRGDPLTLARLETARQASQMRLLAPAVLSRLTPQGAELVVEGAPLAVRADTVLILNGYLPDLSPLQAWPLAWDGEYVPDGPSGQTVLPGVYVIGDLARSGGDFKLLSLAFAQAAVAANHAAHHVRPELKMRPGHSSERGGYPVR</sequence>
<protein>
    <recommendedName>
        <fullName evidence="1">Ferredoxin--NADP reductase</fullName>
        <shortName evidence="1">FNR</shortName>
        <shortName evidence="1">Fd-NADP(+) reductase</shortName>
        <ecNumber evidence="1">1.18.1.2</ecNumber>
    </recommendedName>
</protein>
<proteinExistence type="inferred from homology"/>
<keyword id="KW-0274">FAD</keyword>
<keyword id="KW-0285">Flavoprotein</keyword>
<keyword id="KW-0521">NADP</keyword>
<keyword id="KW-0560">Oxidoreductase</keyword>
<reference key="1">
    <citation type="submission" date="2006-04" db="EMBL/GenBank/DDBJ databases">
        <title>Complete sequence of chromosome of Deinococcus geothermalis DSM 11300.</title>
        <authorList>
            <person name="Copeland A."/>
            <person name="Lucas S."/>
            <person name="Lapidus A."/>
            <person name="Barry K."/>
            <person name="Detter J.C."/>
            <person name="Glavina del Rio T."/>
            <person name="Hammon N."/>
            <person name="Israni S."/>
            <person name="Dalin E."/>
            <person name="Tice H."/>
            <person name="Pitluck S."/>
            <person name="Brettin T."/>
            <person name="Bruce D."/>
            <person name="Han C."/>
            <person name="Tapia R."/>
            <person name="Saunders E."/>
            <person name="Gilna P."/>
            <person name="Schmutz J."/>
            <person name="Larimer F."/>
            <person name="Land M."/>
            <person name="Hauser L."/>
            <person name="Kyrpides N."/>
            <person name="Kim E."/>
            <person name="Daly M.J."/>
            <person name="Fredrickson J.K."/>
            <person name="Makarova K.S."/>
            <person name="Gaidamakova E.K."/>
            <person name="Zhai M."/>
            <person name="Richardson P."/>
        </authorList>
    </citation>
    <scope>NUCLEOTIDE SEQUENCE [LARGE SCALE GENOMIC DNA]</scope>
    <source>
        <strain>DSM 11300 / CIP 105573 / AG-3a</strain>
    </source>
</reference>
<organism>
    <name type="scientific">Deinococcus geothermalis (strain DSM 11300 / CIP 105573 / AG-3a)</name>
    <dbReference type="NCBI Taxonomy" id="319795"/>
    <lineage>
        <taxon>Bacteria</taxon>
        <taxon>Thermotogati</taxon>
        <taxon>Deinococcota</taxon>
        <taxon>Deinococci</taxon>
        <taxon>Deinococcales</taxon>
        <taxon>Deinococcaceae</taxon>
        <taxon>Deinococcus</taxon>
    </lineage>
</organism>
<gene>
    <name type="ordered locus">Dgeo_1013</name>
</gene>
<name>FENR_DEIGD</name>
<feature type="chain" id="PRO_0000364827" description="Ferredoxin--NADP reductase">
    <location>
        <begin position="1"/>
        <end position="331"/>
    </location>
</feature>
<feature type="binding site" evidence="1">
    <location>
        <position position="38"/>
    </location>
    <ligand>
        <name>FAD</name>
        <dbReference type="ChEBI" id="CHEBI:57692"/>
    </ligand>
</feature>
<feature type="binding site" evidence="1">
    <location>
        <position position="46"/>
    </location>
    <ligand>
        <name>FAD</name>
        <dbReference type="ChEBI" id="CHEBI:57692"/>
    </ligand>
</feature>
<feature type="binding site" evidence="1">
    <location>
        <position position="51"/>
    </location>
    <ligand>
        <name>FAD</name>
        <dbReference type="ChEBI" id="CHEBI:57692"/>
    </ligand>
</feature>
<feature type="binding site" evidence="1">
    <location>
        <position position="91"/>
    </location>
    <ligand>
        <name>FAD</name>
        <dbReference type="ChEBI" id="CHEBI:57692"/>
    </ligand>
</feature>
<feature type="binding site" evidence="1">
    <location>
        <position position="125"/>
    </location>
    <ligand>
        <name>FAD</name>
        <dbReference type="ChEBI" id="CHEBI:57692"/>
    </ligand>
</feature>
<feature type="binding site" evidence="1">
    <location>
        <position position="282"/>
    </location>
    <ligand>
        <name>FAD</name>
        <dbReference type="ChEBI" id="CHEBI:57692"/>
    </ligand>
</feature>
<feature type="binding site" evidence="1">
    <location>
        <position position="323"/>
    </location>
    <ligand>
        <name>FAD</name>
        <dbReference type="ChEBI" id="CHEBI:57692"/>
    </ligand>
</feature>
<evidence type="ECO:0000255" key="1">
    <source>
        <dbReference type="HAMAP-Rule" id="MF_01685"/>
    </source>
</evidence>
<comment type="catalytic activity">
    <reaction evidence="1">
        <text>2 reduced [2Fe-2S]-[ferredoxin] + NADP(+) + H(+) = 2 oxidized [2Fe-2S]-[ferredoxin] + NADPH</text>
        <dbReference type="Rhea" id="RHEA:20125"/>
        <dbReference type="Rhea" id="RHEA-COMP:10000"/>
        <dbReference type="Rhea" id="RHEA-COMP:10001"/>
        <dbReference type="ChEBI" id="CHEBI:15378"/>
        <dbReference type="ChEBI" id="CHEBI:33737"/>
        <dbReference type="ChEBI" id="CHEBI:33738"/>
        <dbReference type="ChEBI" id="CHEBI:57783"/>
        <dbReference type="ChEBI" id="CHEBI:58349"/>
        <dbReference type="EC" id="1.18.1.2"/>
    </reaction>
</comment>
<comment type="cofactor">
    <cofactor evidence="1">
        <name>FAD</name>
        <dbReference type="ChEBI" id="CHEBI:57692"/>
    </cofactor>
    <text evidence="1">Binds 1 FAD per subunit.</text>
</comment>
<comment type="subunit">
    <text evidence="1">Homodimer.</text>
</comment>
<comment type="similarity">
    <text evidence="1">Belongs to the ferredoxin--NADP reductase type 2 family.</text>
</comment>